<feature type="chain" id="PRO_0000440607" description="Nonribosomal peptide synthetase otaB">
    <location>
        <begin position="1"/>
        <end position="1880"/>
    </location>
</feature>
<feature type="domain" description="Carrier" evidence="3">
    <location>
        <begin position="728"/>
        <end position="804"/>
    </location>
</feature>
<feature type="region of interest" description="Adenylation 1" evidence="2">
    <location>
        <begin position="205"/>
        <end position="594"/>
    </location>
</feature>
<feature type="region of interest" description="Condensation" evidence="2">
    <location>
        <begin position="840"/>
        <end position="1250"/>
    </location>
</feature>
<feature type="region of interest" description="Adenylation 2" evidence="2">
    <location>
        <begin position="1269"/>
        <end position="1665"/>
    </location>
</feature>
<feature type="modified residue" description="O-(pantetheine 4'-phosphoryl)serine" evidence="3">
    <location>
        <position position="765"/>
    </location>
</feature>
<dbReference type="EC" id="6.3.2.-" evidence="10"/>
<dbReference type="EMBL" id="AM270352">
    <property type="protein sequence ID" value="CAK42678.1"/>
    <property type="molecule type" value="Genomic_DNA"/>
</dbReference>
<dbReference type="RefSeq" id="XP_001397312.2">
    <property type="nucleotide sequence ID" value="XM_001397275.2"/>
</dbReference>
<dbReference type="SMR" id="A2R6H0"/>
<dbReference type="EnsemblFungi" id="CAK42678">
    <property type="protein sequence ID" value="CAK42678"/>
    <property type="gene ID" value="An15g07910"/>
</dbReference>
<dbReference type="GeneID" id="4988392"/>
<dbReference type="KEGG" id="ang:An15g07910"/>
<dbReference type="VEuPathDB" id="FungiDB:An15g07910"/>
<dbReference type="HOGENOM" id="CLU_000022_0_12_1"/>
<dbReference type="Proteomes" id="UP000006706">
    <property type="component" value="Chromosome 3R"/>
</dbReference>
<dbReference type="GO" id="GO:0005737">
    <property type="term" value="C:cytoplasm"/>
    <property type="evidence" value="ECO:0007669"/>
    <property type="project" value="TreeGrafter"/>
</dbReference>
<dbReference type="GO" id="GO:0016874">
    <property type="term" value="F:ligase activity"/>
    <property type="evidence" value="ECO:0007669"/>
    <property type="project" value="UniProtKB-KW"/>
</dbReference>
<dbReference type="GO" id="GO:1904091">
    <property type="term" value="F:non-ribosomal peptide synthetase activity"/>
    <property type="evidence" value="ECO:0000304"/>
    <property type="project" value="UniProt"/>
</dbReference>
<dbReference type="GO" id="GO:0031177">
    <property type="term" value="F:phosphopantetheine binding"/>
    <property type="evidence" value="ECO:0007669"/>
    <property type="project" value="InterPro"/>
</dbReference>
<dbReference type="GO" id="GO:0043041">
    <property type="term" value="P:amino acid activation for nonribosomal peptide biosynthetic process"/>
    <property type="evidence" value="ECO:0007669"/>
    <property type="project" value="TreeGrafter"/>
</dbReference>
<dbReference type="GO" id="GO:1900818">
    <property type="term" value="P:ochratoxin A biosynthetic process"/>
    <property type="evidence" value="ECO:0000250"/>
    <property type="project" value="GO_Central"/>
</dbReference>
<dbReference type="GO" id="GO:0019748">
    <property type="term" value="P:secondary metabolic process"/>
    <property type="evidence" value="ECO:0000303"/>
    <property type="project" value="AspGD"/>
</dbReference>
<dbReference type="CDD" id="cd05918">
    <property type="entry name" value="A_NRPS_SidN3_like"/>
    <property type="match status" value="2"/>
</dbReference>
<dbReference type="CDD" id="cd19545">
    <property type="entry name" value="FUM14_C_NRPS-like"/>
    <property type="match status" value="1"/>
</dbReference>
<dbReference type="FunFam" id="3.30.300.30:FF:000015">
    <property type="entry name" value="Nonribosomal peptide synthase SidD"/>
    <property type="match status" value="2"/>
</dbReference>
<dbReference type="FunFam" id="3.40.50.12780:FF:000014">
    <property type="entry name" value="Nonribosomal peptide synthetase 1"/>
    <property type="match status" value="1"/>
</dbReference>
<dbReference type="Gene3D" id="3.30.300.30">
    <property type="match status" value="2"/>
</dbReference>
<dbReference type="Gene3D" id="1.10.1200.10">
    <property type="entry name" value="ACP-like"/>
    <property type="match status" value="1"/>
</dbReference>
<dbReference type="Gene3D" id="3.30.559.10">
    <property type="entry name" value="Chloramphenicol acetyltransferase-like domain"/>
    <property type="match status" value="1"/>
</dbReference>
<dbReference type="Gene3D" id="3.40.50.12780">
    <property type="entry name" value="N-terminal domain of ligase-like"/>
    <property type="match status" value="2"/>
</dbReference>
<dbReference type="Gene3D" id="3.30.559.30">
    <property type="entry name" value="Nonribosomal peptide synthetase, condensation domain"/>
    <property type="match status" value="1"/>
</dbReference>
<dbReference type="InterPro" id="IPR010071">
    <property type="entry name" value="AA_adenyl_dom"/>
</dbReference>
<dbReference type="InterPro" id="IPR036736">
    <property type="entry name" value="ACP-like_sf"/>
</dbReference>
<dbReference type="InterPro" id="IPR045851">
    <property type="entry name" value="AMP-bd_C_sf"/>
</dbReference>
<dbReference type="InterPro" id="IPR020845">
    <property type="entry name" value="AMP-binding_CS"/>
</dbReference>
<dbReference type="InterPro" id="IPR000873">
    <property type="entry name" value="AMP-dep_synth/lig_dom"/>
</dbReference>
<dbReference type="InterPro" id="IPR042099">
    <property type="entry name" value="ANL_N_sf"/>
</dbReference>
<dbReference type="InterPro" id="IPR023213">
    <property type="entry name" value="CAT-like_dom_sf"/>
</dbReference>
<dbReference type="InterPro" id="IPR001242">
    <property type="entry name" value="Condensatn"/>
</dbReference>
<dbReference type="InterPro" id="IPR020806">
    <property type="entry name" value="PKS_PP-bd"/>
</dbReference>
<dbReference type="InterPro" id="IPR009081">
    <property type="entry name" value="PP-bd_ACP"/>
</dbReference>
<dbReference type="InterPro" id="IPR006162">
    <property type="entry name" value="Ppantetheine_attach_site"/>
</dbReference>
<dbReference type="NCBIfam" id="TIGR01733">
    <property type="entry name" value="AA-adenyl-dom"/>
    <property type="match status" value="2"/>
</dbReference>
<dbReference type="PANTHER" id="PTHR45527:SF1">
    <property type="entry name" value="FATTY ACID SYNTHASE"/>
    <property type="match status" value="1"/>
</dbReference>
<dbReference type="PANTHER" id="PTHR45527">
    <property type="entry name" value="NONRIBOSOMAL PEPTIDE SYNTHETASE"/>
    <property type="match status" value="1"/>
</dbReference>
<dbReference type="Pfam" id="PF00501">
    <property type="entry name" value="AMP-binding"/>
    <property type="match status" value="2"/>
</dbReference>
<dbReference type="Pfam" id="PF00668">
    <property type="entry name" value="Condensation"/>
    <property type="match status" value="1"/>
</dbReference>
<dbReference type="Pfam" id="PF00550">
    <property type="entry name" value="PP-binding"/>
    <property type="match status" value="1"/>
</dbReference>
<dbReference type="SMART" id="SM00823">
    <property type="entry name" value="PKS_PP"/>
    <property type="match status" value="1"/>
</dbReference>
<dbReference type="SMART" id="SM01294">
    <property type="entry name" value="PKS_PP_betabranch"/>
    <property type="match status" value="1"/>
</dbReference>
<dbReference type="SUPFAM" id="SSF56801">
    <property type="entry name" value="Acetyl-CoA synthetase-like"/>
    <property type="match status" value="2"/>
</dbReference>
<dbReference type="SUPFAM" id="SSF47336">
    <property type="entry name" value="ACP-like"/>
    <property type="match status" value="1"/>
</dbReference>
<dbReference type="SUPFAM" id="SSF52777">
    <property type="entry name" value="CoA-dependent acyltransferases"/>
    <property type="match status" value="2"/>
</dbReference>
<dbReference type="PROSITE" id="PS00455">
    <property type="entry name" value="AMP_BINDING"/>
    <property type="match status" value="1"/>
</dbReference>
<dbReference type="PROSITE" id="PS50075">
    <property type="entry name" value="CARRIER"/>
    <property type="match status" value="1"/>
</dbReference>
<dbReference type="PROSITE" id="PS00012">
    <property type="entry name" value="PHOSPHOPANTETHEINE"/>
    <property type="match status" value="1"/>
</dbReference>
<name>OTAB_ASPNC</name>
<protein>
    <recommendedName>
        <fullName evidence="7">Nonribosomal peptide synthetase otaB</fullName>
        <ecNumber evidence="10">6.3.2.-</ecNumber>
    </recommendedName>
    <alternativeName>
        <fullName evidence="7">Ochratoxin biosynthesis cluster protein 2</fullName>
    </alternativeName>
    <alternativeName>
        <fullName evidence="8">Ochratoxin biosynthesis cluster protein B</fullName>
    </alternativeName>
</protein>
<evidence type="ECO:0000250" key="1">
    <source>
        <dbReference type="UniProtKB" id="A0A1R3RGK1"/>
    </source>
</evidence>
<evidence type="ECO:0000255" key="2"/>
<evidence type="ECO:0000255" key="3">
    <source>
        <dbReference type="PROSITE-ProRule" id="PRU00258"/>
    </source>
</evidence>
<evidence type="ECO:0000269" key="4">
    <source>
    </source>
</evidence>
<evidence type="ECO:0000269" key="5">
    <source>
    </source>
</evidence>
<evidence type="ECO:0000269" key="6">
    <source>
    </source>
</evidence>
<evidence type="ECO:0000303" key="7">
    <source>
    </source>
</evidence>
<evidence type="ECO:0000303" key="8">
    <source>
    </source>
</evidence>
<evidence type="ECO:0000305" key="9"/>
<evidence type="ECO:0000305" key="10">
    <source>
    </source>
</evidence>
<evidence type="ECO:0000305" key="11">
    <source>
    </source>
</evidence>
<reference key="1">
    <citation type="journal article" date="2007" name="Nat. Biotechnol.">
        <title>Genome sequencing and analysis of the versatile cell factory Aspergillus niger CBS 513.88.</title>
        <authorList>
            <person name="Pel H.J."/>
            <person name="de Winde J.H."/>
            <person name="Archer D.B."/>
            <person name="Dyer P.S."/>
            <person name="Hofmann G."/>
            <person name="Schaap P.J."/>
            <person name="Turner G."/>
            <person name="de Vries R.P."/>
            <person name="Albang R."/>
            <person name="Albermann K."/>
            <person name="Andersen M.R."/>
            <person name="Bendtsen J.D."/>
            <person name="Benen J.A.E."/>
            <person name="van den Berg M."/>
            <person name="Breestraat S."/>
            <person name="Caddick M.X."/>
            <person name="Contreras R."/>
            <person name="Cornell M."/>
            <person name="Coutinho P.M."/>
            <person name="Danchin E.G.J."/>
            <person name="Debets A.J.M."/>
            <person name="Dekker P."/>
            <person name="van Dijck P.W.M."/>
            <person name="van Dijk A."/>
            <person name="Dijkhuizen L."/>
            <person name="Driessen A.J.M."/>
            <person name="d'Enfert C."/>
            <person name="Geysens S."/>
            <person name="Goosen C."/>
            <person name="Groot G.S.P."/>
            <person name="de Groot P.W.J."/>
            <person name="Guillemette T."/>
            <person name="Henrissat B."/>
            <person name="Herweijer M."/>
            <person name="van den Hombergh J.P.T.W."/>
            <person name="van den Hondel C.A.M.J.J."/>
            <person name="van der Heijden R.T.J.M."/>
            <person name="van der Kaaij R.M."/>
            <person name="Klis F.M."/>
            <person name="Kools H.J."/>
            <person name="Kubicek C.P."/>
            <person name="van Kuyk P.A."/>
            <person name="Lauber J."/>
            <person name="Lu X."/>
            <person name="van der Maarel M.J.E.C."/>
            <person name="Meulenberg R."/>
            <person name="Menke H."/>
            <person name="Mortimer M.A."/>
            <person name="Nielsen J."/>
            <person name="Oliver S.G."/>
            <person name="Olsthoorn M."/>
            <person name="Pal K."/>
            <person name="van Peij N.N.M.E."/>
            <person name="Ram A.F.J."/>
            <person name="Rinas U."/>
            <person name="Roubos J.A."/>
            <person name="Sagt C.M.J."/>
            <person name="Schmoll M."/>
            <person name="Sun J."/>
            <person name="Ussery D."/>
            <person name="Varga J."/>
            <person name="Vervecken W."/>
            <person name="van de Vondervoort P.J.J."/>
            <person name="Wedler H."/>
            <person name="Woesten H.A.B."/>
            <person name="Zeng A.-P."/>
            <person name="van Ooyen A.J.J."/>
            <person name="Visser J."/>
            <person name="Stam H."/>
        </authorList>
    </citation>
    <scope>NUCLEOTIDE SEQUENCE [LARGE SCALE GENOMIC DNA]</scope>
    <source>
        <strain>ATCC MYA-4892 / CBS 513.88 / FGSC A1513</strain>
    </source>
</reference>
<reference key="2">
    <citation type="journal article" date="2012" name="Int. J. Food Microbiol.">
        <title>Strain-specific polyketide synthase genes of Aspergillus niger.</title>
        <authorList>
            <person name="Ferracin L.M."/>
            <person name="Fier C.B."/>
            <person name="Vieira M.L."/>
            <person name="Monteiro-Vitorello C.B."/>
            <person name="Varani A.M."/>
            <person name="Rossi M.M."/>
            <person name="Mueller-Santos M."/>
            <person name="Taniwaki M.H."/>
            <person name="Thie Iamanaka B."/>
            <person name="Fungaro M.H."/>
        </authorList>
    </citation>
    <scope>IDENTIFICATION</scope>
</reference>
<reference key="3">
    <citation type="journal article" date="2016" name="Front. Microbiol.">
        <title>Variation in fumonisin and ochratoxin production associated with differences in biosynthetic gene content in Aspergillus niger and A. welwitschiae isolates from multiple crop and geographic origins.</title>
        <authorList>
            <person name="Susca A."/>
            <person name="Proctor R.H."/>
            <person name="Morelli M."/>
            <person name="Haidukowski M."/>
            <person name="Gallo A."/>
            <person name="Logrieco A.F."/>
            <person name="Moretti A."/>
        </authorList>
    </citation>
    <scope>FUNCTION</scope>
</reference>
<reference key="4">
    <citation type="journal article" date="2020" name="Front. Microbiol.">
        <title>Comparative genomic analysis of ochratoxin A biosynthetic cluster in producing fungi: new evidence of a cyclase gene involvement.</title>
        <authorList>
            <person name="Ferrara M."/>
            <person name="Gallo A."/>
            <person name="Perrone G."/>
            <person name="Magista D."/>
            <person name="Baker S.E."/>
        </authorList>
    </citation>
    <scope>NOMENCLATURE</scope>
    <scope>FUNCTION</scope>
</reference>
<reference key="5">
    <citation type="journal article" date="2022" name="J. Agric. Food Chem.">
        <title>Deletion and overexpression of the AnOTAbzip gene, a positive regulator of ochratoxin A biosynthesis in Aspergillus niger.</title>
        <authorList>
            <person name="Zhang J."/>
            <person name="Li L."/>
            <person name="Yang Y."/>
            <person name="Zhao C."/>
            <person name="Hu J."/>
            <person name="Xue X."/>
            <person name="Gao Q."/>
            <person name="Wang D."/>
            <person name="Zhuang Z."/>
            <person name="Zhang Y."/>
        </authorList>
    </citation>
    <scope>INDUCTION</scope>
</reference>
<reference key="6">
    <citation type="journal article" date="2022" name="Toxins">
        <title>Insights into the Underlying Mechanism of Ochratoxin A Production in Aspergillus niger CBS 513.88 Using Different Carbon Sources.</title>
        <authorList>
            <person name="Wei S."/>
            <person name="Hu C."/>
            <person name="Nie P."/>
            <person name="Zhai H."/>
            <person name="Zhang S."/>
            <person name="Li N."/>
            <person name="Lv Y."/>
            <person name="Hu Y."/>
        </authorList>
    </citation>
    <scope>INDUCTION</scope>
</reference>
<accession>A2R6H0</accession>
<sequence>MDLRTGYMFPCLTDGQFVEDDTLHSVALGIDSPISLSNGPDGEWARELSIAWAILLFTYNEQEAVEFACLRNQHWFCVDAKMNRDLSWKDIEIHEGGTSDGRQVNTGLCLSQEGATPIPTRLQLVLVGSISGGGLSLEYRPNLLSAEQAANVASTLETIMRALQGRTVSIGSIDVLSERNITDLNRFAVARRALPEGCLDDIITAQAVERGNSIAIDSWDGTLSYQELDTLSTLLAKYLRSLDLSGTYVPLCADKSAWAVVAMLAILKAGAACSPLDPSHPRSRLQSMVQLCDAKAVIATERHASLLQMDGVEVVVVGPDMSSFLQHQISPAEAPGPSHRDVAFLMWTSGSTGAPKGVILEHTALFMSISAYAAANQFSAETRCFQFTSFTFAVSLCDIFGTLSQGGCLCMPSETQRLTDLTGALRELHATFCWLTSTSLADLNPHDLPDLRSVTVGGESLSRELVARWATHLRLTVSYGTTETAGWCLLNTGLSPTGDARTLGRPTIPGVWIAHPDNVNRLVPVGAVGELLVEGPFLAQGYLDDEERTAAHFIPPPSWMTQFRPQEVTRLYRTNDLVRYNSDGSVSFVGRRQAHAKIRGNRISLPEIEAQVRHSCKDAQAVVELVTTKDQVEMLTAFLVVSGQESLSEAPLICPPNDCFRETVTNSLSVLEQSLPSYMVPTVFVPLSHIPLTRTNKADRHVLRKLAEAMSRADLVQLMTKPRPVEQLPLSPLERQIQGLWADLTNIPAESIGPDDNFFHLGGDSVLAIHLVPLARRHGLSLTVQDVFRYPKMKELGAHLEQEASQGSQRSKSQPIASFDPTPWKSVAAQQCGIDELAIEDVYPCTALQEGLMALSAQRTGAYILSMAQNLSPTVDLGRLLEAWQTVVKAVPILRTRIVRLTNEGFHQAVVDESIEWQSVKSEAEFRRMNQLNPLGLGTRLVRFALLLSAADQPSRLLLAMHHSVFDRWSGPLLVRAVEDAYQGQPVMPQYFKDFVSYVSTCPREEVDAFWRHQLSDADPTVFPPTPEPNYLPSPTKSSERIILLPLSRTHVTITTKLRLCWALVLSQHTGNADVVFGAVSTGRSARVEGIESLIGPTLATVPFRVRIDGSAMVSDALQALQDDAATMLPYEQRGLQNIARISRETRAACNFQNLLIVHAPDSRGHSTILKITDDQQLLDLFSYGLTLSCEVLDQDRIQCQAFFDPNMLEHAYVKVLLDQLAHAVRQIHAVPDCKVGEISLLSPQDQQQLQEWNPPIPRTGLTIHETIQRQCLAHPQKEAVCSWDGSITYRALNELSSSLASQILQRCGQPTSFVPLLMERSKWTAVTMLAVMKAGKAFVLLDASFPVERLQSICCQLDATLILSSSKHADVAQRLVSNPLIVDAIIGLPGPSLALPVVHPDATLYAVFTSGSTGRPKAVLISHASYGSGAEAHIPAALITPATRVLQFASYAFDASIIEHLSTFMAGGCVCVLSDPERTSSLAEAVAAQRANFAWLTPSVTRFIDPQDFPTMDRLCLMGESMRRSEIERWSSRVNLMQAYGPAECSVLATLRPSLTTQSDPRNIGCARGCHAWVVDPENHTRLLPIGAVGELIIEGPIVGQGYHGSPEQTQAAFPPVPDWLSDYHDGDLSQVRVYKTGDLVQYSPKLDGSLLFIGRKDRQVKLRGQRLELSEVEYHAYHTLAGTWELVVELINSQHNPALALFLAEKQDSPKPCGVLSMTPAWRSVMSRLRDTLASRLPPYMVPTVWIPITQIPLSSSQKTDRRSLQSLAGDLSAEQYQTYILASSSEATPGLTHSHLKEVPLNENELVLQDLVRQVFTGEDGSLSVASIPMDGLFTDIGGDSLGALALTSLAKQHGFHFTAGDVLGSSLGELASLRHT</sequence>
<comment type="function">
    <text evidence="1 4 10 11">Nonribosomal peptide synthetase; part of the gene cluster that mediates the biosynthesis of ochratoxin A (OTA), a mycotoxin composed of a chlorinated type I polyketide dihydroisocoumarin moiety linked to L-phenylalanine, and demonstrated to have nephrotoxic, immunotoxic, genotoxic, neurotoxic, and teratogenic properties (PubMed:27667988). OtaB is responsible for the linking of phenylalanine to the dihydroisocoumarin ring (By similarity). The pathway begins with the highly reducing polyketide synthase otaA that catalyzes the formation of the isocoumarin group during the initial stages of biosynthesis, starting from one acetate and 4 malonate units, to originate the characteristic pentaketide skeleton 7-methylmellein (7-MM) of the OTA molecule. The newly identified cyclase otaY might be involved in the polyketide cyclization reaction during the initial steps of the OTA biosynthesis. 7-MM is then oxidized into 7-carboxymellein (also called ochratoxin beta) by the cytochrome P450 monooxygenase otaC. The NRPS encoded by the otaB gene is involved in the linking of phenylalanine to the dihydroisocoumarin ring. The reaction catalyzed by NRPS results in the production of ochratoxin B (OTB), which is the non-chlorinated analog of OTA and which subsequently serves as the substrate of the halogenase otaD for chlorination activity to form the final molecular structure of OTA, containing a chlorine atom in the C-5 position of the molecule (Probable) (PubMed:27667988, PubMed:33391201).</text>
</comment>
<comment type="catalytic activity">
    <reaction evidence="10">
        <text>7-carboxymellein + L-phenylalanine + ATP = ochratoxin B + ADP + phosphate + H(+)</text>
        <dbReference type="Rhea" id="RHEA:72775"/>
        <dbReference type="ChEBI" id="CHEBI:15378"/>
        <dbReference type="ChEBI" id="CHEBI:30616"/>
        <dbReference type="ChEBI" id="CHEBI:43474"/>
        <dbReference type="ChEBI" id="CHEBI:58095"/>
        <dbReference type="ChEBI" id="CHEBI:192525"/>
        <dbReference type="ChEBI" id="CHEBI:192526"/>
        <dbReference type="ChEBI" id="CHEBI:456216"/>
    </reaction>
    <physiologicalReaction direction="left-to-right" evidence="10">
        <dbReference type="Rhea" id="RHEA:72776"/>
    </physiologicalReaction>
</comment>
<comment type="pathway">
    <text evidence="1">Mycotoxin biosynthesis.</text>
</comment>
<comment type="induction">
    <text evidence="5 6">Expression is positively regulated by the ochratoxin cluster transcription factor otaR1, probably via its binding to the conserved 5'-ACGT-3' bZIP binding motifs found in multiple copies (3 to 4) in the promoters of the OTA biosynthetic genes (PubMed:35143724). Expression is induced by sucrose, glucose and arabinose which repress the gal4 transcription factor, a negative regulator of the ochratoxin gene cluster (PubMed:36006213).</text>
</comment>
<comment type="domain">
    <text evidence="1">NRP synthetases are composed of discrete domains (adenylation (A), thiolation (T) or peptidyl carrier protein (PCP) and condensation (C) domains) which when grouped together are referred to as a single module. Each module is responsible for the recognition (via the A domain) and incorporation of a single amino acid into the growing peptide product. Thus, an NRP synthetase is generally composed of one or more modules and can terminate in a thioesterase domain (TE) that releases the newly synthesized peptide from the enzyme. Occasionally, epimerase (E) domains (responsible for L- to D- amino acid conversion) are present within the NRP synthetase. OtaB has the following architecture: A-T-C-A.</text>
</comment>
<comment type="similarity">
    <text evidence="9">Belongs to the NRP synthetase family.</text>
</comment>
<organism>
    <name type="scientific">Aspergillus niger (strain ATCC MYA-4892 / CBS 513.88 / FGSC A1513)</name>
    <dbReference type="NCBI Taxonomy" id="425011"/>
    <lineage>
        <taxon>Eukaryota</taxon>
        <taxon>Fungi</taxon>
        <taxon>Dikarya</taxon>
        <taxon>Ascomycota</taxon>
        <taxon>Pezizomycotina</taxon>
        <taxon>Eurotiomycetes</taxon>
        <taxon>Eurotiomycetidae</taxon>
        <taxon>Eurotiales</taxon>
        <taxon>Aspergillaceae</taxon>
        <taxon>Aspergillus</taxon>
        <taxon>Aspergillus subgen. Circumdati</taxon>
    </lineage>
</organism>
<keyword id="KW-0436">Ligase</keyword>
<keyword id="KW-0596">Phosphopantetheine</keyword>
<keyword id="KW-0597">Phosphoprotein</keyword>
<keyword id="KW-1185">Reference proteome</keyword>
<keyword id="KW-0677">Repeat</keyword>
<keyword id="KW-0843">Virulence</keyword>
<gene>
    <name evidence="8" type="primary">otaB</name>
    <name evidence="7" type="synonym">ota2</name>
    <name type="ORF">An15g07910</name>
</gene>
<proteinExistence type="evidence at transcript level"/>